<feature type="initiator methionine" description="Removed" evidence="6">
    <location>
        <position position="1"/>
    </location>
</feature>
<feature type="chain" id="PRO_0000072513" description="Thiamine pyrophosphokinase">
    <location>
        <begin position="2"/>
        <end position="319"/>
    </location>
</feature>
<feature type="modified residue" description="N-acetylserine" evidence="6">
    <location>
        <position position="2"/>
    </location>
</feature>
<feature type="strand" evidence="7">
    <location>
        <begin position="4"/>
        <end position="7"/>
    </location>
</feature>
<feature type="strand" evidence="7">
    <location>
        <begin position="10"/>
        <end position="12"/>
    </location>
</feature>
<feature type="strand" evidence="7">
    <location>
        <begin position="23"/>
        <end position="27"/>
    </location>
</feature>
<feature type="helix" evidence="7">
    <location>
        <begin position="28"/>
        <end position="30"/>
    </location>
</feature>
<feature type="strand" evidence="7">
    <location>
        <begin position="37"/>
        <end position="43"/>
    </location>
</feature>
<feature type="helix" evidence="7">
    <location>
        <begin position="52"/>
        <end position="61"/>
    </location>
</feature>
<feature type="strand" evidence="7">
    <location>
        <begin position="63"/>
        <end position="68"/>
    </location>
</feature>
<feature type="helix" evidence="7">
    <location>
        <begin position="71"/>
        <end position="78"/>
    </location>
</feature>
<feature type="helix" evidence="7">
    <location>
        <begin position="83"/>
        <end position="86"/>
    </location>
</feature>
<feature type="strand" evidence="7">
    <location>
        <begin position="92"/>
        <end position="96"/>
    </location>
</feature>
<feature type="helix" evidence="7">
    <location>
        <begin position="103"/>
        <end position="111"/>
    </location>
</feature>
<feature type="strand" evidence="7">
    <location>
        <begin position="115"/>
        <end position="118"/>
    </location>
</feature>
<feature type="strand" evidence="7">
    <location>
        <begin position="122"/>
        <end position="124"/>
    </location>
</feature>
<feature type="helix" evidence="7">
    <location>
        <begin position="126"/>
        <end position="139"/>
    </location>
</feature>
<feature type="helix" evidence="7">
    <location>
        <begin position="141"/>
        <end position="147"/>
    </location>
</feature>
<feature type="turn" evidence="7">
    <location>
        <begin position="153"/>
        <end position="155"/>
    </location>
</feature>
<feature type="helix" evidence="7">
    <location>
        <begin position="156"/>
        <end position="158"/>
    </location>
</feature>
<feature type="turn" evidence="7">
    <location>
        <begin position="161"/>
        <end position="163"/>
    </location>
</feature>
<feature type="helix" evidence="7">
    <location>
        <begin position="164"/>
        <end position="173"/>
    </location>
</feature>
<feature type="helix" evidence="7">
    <location>
        <begin position="178"/>
        <end position="180"/>
    </location>
</feature>
<feature type="strand" evidence="7">
    <location>
        <begin position="184"/>
        <end position="195"/>
    </location>
</feature>
<feature type="helix" evidence="7">
    <location>
        <begin position="196"/>
        <end position="212"/>
    </location>
</feature>
<feature type="strand" evidence="7">
    <location>
        <begin position="216"/>
        <end position="221"/>
    </location>
</feature>
<feature type="strand" evidence="7">
    <location>
        <begin position="223"/>
        <end position="230"/>
    </location>
</feature>
<feature type="strand" evidence="7">
    <location>
        <begin position="235"/>
        <end position="238"/>
    </location>
</feature>
<feature type="helix" evidence="7">
    <location>
        <begin position="241"/>
        <end position="247"/>
    </location>
</feature>
<feature type="strand" evidence="7">
    <location>
        <begin position="248"/>
        <end position="254"/>
    </location>
</feature>
<feature type="strand" evidence="7">
    <location>
        <begin position="260"/>
        <end position="278"/>
    </location>
</feature>
<feature type="turn" evidence="7">
    <location>
        <begin position="279"/>
        <end position="282"/>
    </location>
</feature>
<feature type="strand" evidence="7">
    <location>
        <begin position="285"/>
        <end position="288"/>
    </location>
</feature>
<feature type="strand" evidence="7">
    <location>
        <begin position="292"/>
        <end position="302"/>
    </location>
</feature>
<feature type="strand" evidence="7">
    <location>
        <begin position="304"/>
        <end position="310"/>
    </location>
</feature>
<feature type="helix" evidence="7">
    <location>
        <begin position="312"/>
        <end position="315"/>
    </location>
</feature>
<feature type="helix" evidence="7">
    <location>
        <begin position="316"/>
        <end position="318"/>
    </location>
</feature>
<name>THI80_YEAST</name>
<proteinExistence type="evidence at protein level"/>
<gene>
    <name evidence="4" type="primary">THI80</name>
    <name type="ordered locus">YOR143C</name>
    <name type="ORF">YOR3373C</name>
</gene>
<sequence>MSEECIENPERIKIGTDLINIRNKMNLKELIHPNEDENSTLLILNQKIDIPRPLFYKIWKLHDLKVCADGAANRLYDYLDDDETLRIKYLPNYIIGDLDSLSEKVYKYYRKNKVTIIKQTTQYSTDFTKCVNLISLHFNSPEFRSLISNKDNLQSNHGIELEKGIHTLYNTMTESLVFSKVTPISLLALGGIGGRFDQTVHSITQLYTLSENASYFKLCYMTPTDLIFLIKKNGTLIEYDPQFRNTCIGNCGLLPIGEATLVKETRGLKWDVKNWPTSVVTGRVSSSNRFVGDNCCFIDTKDDIILNVEIFVDKLIDFL</sequence>
<reference key="1">
    <citation type="journal article" date="1993" name="J. Biol. Chem.">
        <title>Isolation and characterization of a thiamin pyrophosphokinase gene, THI80, from Saccharomyces cerevisiae.</title>
        <authorList>
            <person name="Nosaka K."/>
            <person name="Kaneko Y."/>
            <person name="Nishimura H."/>
            <person name="Iwashima A."/>
        </authorList>
    </citation>
    <scope>NUCLEOTIDE SEQUENCE [GENOMIC DNA]</scope>
    <scope>FUNCTION</scope>
    <scope>CATALYTIC ACTIVITY</scope>
    <scope>INDUCTION</scope>
</reference>
<reference key="2">
    <citation type="journal article" date="1997" name="Yeast">
        <title>DNA sequencing and analysis of 130 kb from yeast chromosome XV.</title>
        <authorList>
            <person name="Voss H."/>
            <person name="Benes V."/>
            <person name="Andrade M.A."/>
            <person name="Valencia A."/>
            <person name="Rechmann S."/>
            <person name="Teodoru C."/>
            <person name="Schwager C."/>
            <person name="Paces V."/>
            <person name="Sander C."/>
            <person name="Ansorge W."/>
        </authorList>
    </citation>
    <scope>NUCLEOTIDE SEQUENCE [GENOMIC DNA]</scope>
</reference>
<reference key="3">
    <citation type="journal article" date="1997" name="Nature">
        <title>The nucleotide sequence of Saccharomyces cerevisiae chromosome XV.</title>
        <authorList>
            <person name="Dujon B."/>
            <person name="Albermann K."/>
            <person name="Aldea M."/>
            <person name="Alexandraki D."/>
            <person name="Ansorge W."/>
            <person name="Arino J."/>
            <person name="Benes V."/>
            <person name="Bohn C."/>
            <person name="Bolotin-Fukuhara M."/>
            <person name="Bordonne R."/>
            <person name="Boyer J."/>
            <person name="Camasses A."/>
            <person name="Casamayor A."/>
            <person name="Casas C."/>
            <person name="Cheret G."/>
            <person name="Cziepluch C."/>
            <person name="Daignan-Fornier B."/>
            <person name="Dang V.-D."/>
            <person name="de Haan M."/>
            <person name="Delius H."/>
            <person name="Durand P."/>
            <person name="Fairhead C."/>
            <person name="Feldmann H."/>
            <person name="Gaillon L."/>
            <person name="Galisson F."/>
            <person name="Gamo F.-J."/>
            <person name="Gancedo C."/>
            <person name="Goffeau A."/>
            <person name="Goulding S.E."/>
            <person name="Grivell L.A."/>
            <person name="Habbig B."/>
            <person name="Hand N.J."/>
            <person name="Hani J."/>
            <person name="Hattenhorst U."/>
            <person name="Hebling U."/>
            <person name="Hernando Y."/>
            <person name="Herrero E."/>
            <person name="Heumann K."/>
            <person name="Hiesel R."/>
            <person name="Hilger F."/>
            <person name="Hofmann B."/>
            <person name="Hollenberg C.P."/>
            <person name="Hughes B."/>
            <person name="Jauniaux J.-C."/>
            <person name="Kalogeropoulos A."/>
            <person name="Katsoulou C."/>
            <person name="Kordes E."/>
            <person name="Lafuente M.J."/>
            <person name="Landt O."/>
            <person name="Louis E.J."/>
            <person name="Maarse A.C."/>
            <person name="Madania A."/>
            <person name="Mannhaupt G."/>
            <person name="Marck C."/>
            <person name="Martin R.P."/>
            <person name="Mewes H.-W."/>
            <person name="Michaux G."/>
            <person name="Paces V."/>
            <person name="Parle-McDermott A.G."/>
            <person name="Pearson B.M."/>
            <person name="Perrin A."/>
            <person name="Pettersson B."/>
            <person name="Poch O."/>
            <person name="Pohl T.M."/>
            <person name="Poirey R."/>
            <person name="Portetelle D."/>
            <person name="Pujol A."/>
            <person name="Purnelle B."/>
            <person name="Ramezani Rad M."/>
            <person name="Rechmann S."/>
            <person name="Schwager C."/>
            <person name="Schweizer M."/>
            <person name="Sor F."/>
            <person name="Sterky F."/>
            <person name="Tarassov I.A."/>
            <person name="Teodoru C."/>
            <person name="Tettelin H."/>
            <person name="Thierry A."/>
            <person name="Tobiasch E."/>
            <person name="Tzermia M."/>
            <person name="Uhlen M."/>
            <person name="Unseld M."/>
            <person name="Valens M."/>
            <person name="Vandenbol M."/>
            <person name="Vetter I."/>
            <person name="Vlcek C."/>
            <person name="Voet M."/>
            <person name="Volckaert G."/>
            <person name="Voss H."/>
            <person name="Wambutt R."/>
            <person name="Wedler H."/>
            <person name="Wiemann S."/>
            <person name="Winsor B."/>
            <person name="Wolfe K.H."/>
            <person name="Zollner A."/>
            <person name="Zumstein E."/>
            <person name="Kleine K."/>
        </authorList>
    </citation>
    <scope>NUCLEOTIDE SEQUENCE [LARGE SCALE GENOMIC DNA]</scope>
    <source>
        <strain>ATCC 204508 / S288c</strain>
    </source>
</reference>
<reference key="4">
    <citation type="journal article" date="2014" name="G3 (Bethesda)">
        <title>The reference genome sequence of Saccharomyces cerevisiae: Then and now.</title>
        <authorList>
            <person name="Engel S.R."/>
            <person name="Dietrich F.S."/>
            <person name="Fisk D.G."/>
            <person name="Binkley G."/>
            <person name="Balakrishnan R."/>
            <person name="Costanzo M.C."/>
            <person name="Dwight S.S."/>
            <person name="Hitz B.C."/>
            <person name="Karra K."/>
            <person name="Nash R.S."/>
            <person name="Weng S."/>
            <person name="Wong E.D."/>
            <person name="Lloyd P."/>
            <person name="Skrzypek M.S."/>
            <person name="Miyasato S.R."/>
            <person name="Simison M."/>
            <person name="Cherry J.M."/>
        </authorList>
    </citation>
    <scope>GENOME REANNOTATION</scope>
    <source>
        <strain>ATCC 204508 / S288c</strain>
    </source>
</reference>
<reference key="5">
    <citation type="journal article" date="2003" name="Nature">
        <title>Global analysis of protein expression in yeast.</title>
        <authorList>
            <person name="Ghaemmaghami S."/>
            <person name="Huh W.-K."/>
            <person name="Bower K."/>
            <person name="Howson R.W."/>
            <person name="Belle A."/>
            <person name="Dephoure N."/>
            <person name="O'Shea E.K."/>
            <person name="Weissman J.S."/>
        </authorList>
    </citation>
    <scope>LEVEL OF PROTEIN EXPRESSION [LARGE SCALE ANALYSIS]</scope>
</reference>
<reference key="6">
    <citation type="journal article" date="2012" name="Proc. Natl. Acad. Sci. U.S.A.">
        <title>N-terminal acetylome analyses and functional insights of the N-terminal acetyltransferase NatB.</title>
        <authorList>
            <person name="Van Damme P."/>
            <person name="Lasa M."/>
            <person name="Polevoda B."/>
            <person name="Gazquez C."/>
            <person name="Elosegui-Artola A."/>
            <person name="Kim D.S."/>
            <person name="De Juan-Pardo E."/>
            <person name="Demeyer K."/>
            <person name="Hole K."/>
            <person name="Larrea E."/>
            <person name="Timmerman E."/>
            <person name="Prieto J."/>
            <person name="Arnesen T."/>
            <person name="Sherman F."/>
            <person name="Gevaert K."/>
            <person name="Aldabe R."/>
        </authorList>
    </citation>
    <scope>ACETYLATION [LARGE SCALE ANALYSIS] AT SER-2</scope>
    <scope>CLEAVAGE OF INITIATOR METHIONINE [LARGE SCALE ANALYSIS]</scope>
    <scope>IDENTIFICATION BY MASS SPECTROMETRY [LARGE SCALE ANALYSIS]</scope>
</reference>
<reference key="7">
    <citation type="journal article" date="2001" name="Structure">
        <title>The crystal structure of yeast thiamin pyrophosphokinase.</title>
        <authorList>
            <person name="Baker L.-J."/>
            <person name="Dorocke J.A."/>
            <person name="Harris R.A."/>
            <person name="Timm D.E."/>
        </authorList>
    </citation>
    <scope>X-RAY CRYSTALLOGRAPHY (1.8 ANGSTROMS)</scope>
    <scope>SUBUNIT</scope>
</reference>
<protein>
    <recommendedName>
        <fullName evidence="4">Thiamine pyrophosphokinase</fullName>
        <shortName evidence="4">TPK</shortName>
        <shortName evidence="4">Thiamine kinase</shortName>
        <ecNumber evidence="3">2.7.6.2</ecNumber>
    </recommendedName>
</protein>
<evidence type="ECO:0000269" key="1">
    <source>
    </source>
</evidence>
<evidence type="ECO:0000269" key="2">
    <source>
    </source>
</evidence>
<evidence type="ECO:0000269" key="3">
    <source>
    </source>
</evidence>
<evidence type="ECO:0000303" key="4">
    <source>
    </source>
</evidence>
<evidence type="ECO:0000305" key="5"/>
<evidence type="ECO:0007744" key="6">
    <source>
    </source>
</evidence>
<evidence type="ECO:0007829" key="7">
    <source>
        <dbReference type="PDB" id="1IG0"/>
    </source>
</evidence>
<organism>
    <name type="scientific">Saccharomyces cerevisiae (strain ATCC 204508 / S288c)</name>
    <name type="common">Baker's yeast</name>
    <dbReference type="NCBI Taxonomy" id="559292"/>
    <lineage>
        <taxon>Eukaryota</taxon>
        <taxon>Fungi</taxon>
        <taxon>Dikarya</taxon>
        <taxon>Ascomycota</taxon>
        <taxon>Saccharomycotina</taxon>
        <taxon>Saccharomycetes</taxon>
        <taxon>Saccharomycetales</taxon>
        <taxon>Saccharomycetaceae</taxon>
        <taxon>Saccharomyces</taxon>
    </lineage>
</organism>
<keyword id="KW-0002">3D-structure</keyword>
<keyword id="KW-0007">Acetylation</keyword>
<keyword id="KW-0067">ATP-binding</keyword>
<keyword id="KW-0418">Kinase</keyword>
<keyword id="KW-0547">Nucleotide-binding</keyword>
<keyword id="KW-1185">Reference proteome</keyword>
<keyword id="KW-0808">Transferase</keyword>
<comment type="function">
    <text evidence="3">Essential protein, it is the only enzyme in yeast capable of synthesizing thiamine pyrophosphate (TPP).</text>
</comment>
<comment type="catalytic activity">
    <reaction evidence="3">
        <text>thiamine + ATP = thiamine diphosphate + AMP + H(+)</text>
        <dbReference type="Rhea" id="RHEA:11576"/>
        <dbReference type="ChEBI" id="CHEBI:15378"/>
        <dbReference type="ChEBI" id="CHEBI:18385"/>
        <dbReference type="ChEBI" id="CHEBI:30616"/>
        <dbReference type="ChEBI" id="CHEBI:58937"/>
        <dbReference type="ChEBI" id="CHEBI:456215"/>
        <dbReference type="EC" id="2.7.6.2"/>
    </reaction>
</comment>
<comment type="pathway">
    <text evidence="3">Cofactor biosynthesis; thiamine diphosphate biosynthesis; thiamine diphosphate from thiamine: step 1/1.</text>
</comment>
<comment type="subunit">
    <text evidence="1">Homodimer.</text>
</comment>
<comment type="induction">
    <text evidence="3">Expression requires the positive regulatory factors THI2 and THI3 (PubMed:8394343). Incompletely repressed by exogenous thiamine pyrophosphokinase (PubMed:8394343).</text>
</comment>
<comment type="miscellaneous">
    <text evidence="2">Present with 3320 molecules/cell in log phase SD medium.</text>
</comment>
<comment type="similarity">
    <text evidence="5">Belongs to the thiamine pyrophosphokinase family.</text>
</comment>
<dbReference type="EC" id="2.7.6.2" evidence="3"/>
<dbReference type="EMBL" id="D14417">
    <property type="protein sequence ID" value="BAA03312.1"/>
    <property type="molecule type" value="Genomic_DNA"/>
</dbReference>
<dbReference type="EMBL" id="X94335">
    <property type="protein sequence ID" value="CAA64061.1"/>
    <property type="molecule type" value="Genomic_DNA"/>
</dbReference>
<dbReference type="EMBL" id="Z75051">
    <property type="protein sequence ID" value="CAA99346.1"/>
    <property type="molecule type" value="Genomic_DNA"/>
</dbReference>
<dbReference type="EMBL" id="BK006948">
    <property type="protein sequence ID" value="DAA10917.1"/>
    <property type="molecule type" value="Genomic_DNA"/>
</dbReference>
<dbReference type="PIR" id="A47499">
    <property type="entry name" value="A47499"/>
</dbReference>
<dbReference type="RefSeq" id="NP_014786.1">
    <property type="nucleotide sequence ID" value="NM_001183562.1"/>
</dbReference>
<dbReference type="PDB" id="1IG0">
    <property type="method" value="X-ray"/>
    <property type="resolution" value="1.80 A"/>
    <property type="chains" value="A/B=1-319"/>
</dbReference>
<dbReference type="PDBsum" id="1IG0"/>
<dbReference type="SMR" id="P35202"/>
<dbReference type="BioGRID" id="34540">
    <property type="interactions" value="159"/>
</dbReference>
<dbReference type="DIP" id="DIP-5324N"/>
<dbReference type="FunCoup" id="P35202">
    <property type="interactions" value="363"/>
</dbReference>
<dbReference type="IntAct" id="P35202">
    <property type="interactions" value="9"/>
</dbReference>
<dbReference type="STRING" id="4932.YOR143C"/>
<dbReference type="iPTMnet" id="P35202"/>
<dbReference type="PaxDb" id="4932-YOR143C"/>
<dbReference type="PeptideAtlas" id="P35202"/>
<dbReference type="EnsemblFungi" id="YOR143C_mRNA">
    <property type="protein sequence ID" value="YOR143C"/>
    <property type="gene ID" value="YOR143C"/>
</dbReference>
<dbReference type="GeneID" id="854314"/>
<dbReference type="KEGG" id="sce:YOR143C"/>
<dbReference type="AGR" id="SGD:S000005669"/>
<dbReference type="SGD" id="S000005669">
    <property type="gene designation" value="THI80"/>
</dbReference>
<dbReference type="VEuPathDB" id="FungiDB:YOR143C"/>
<dbReference type="eggNOG" id="KOG3153">
    <property type="taxonomic scope" value="Eukaryota"/>
</dbReference>
<dbReference type="GeneTree" id="ENSGT00390000016016"/>
<dbReference type="HOGENOM" id="CLU_044237_0_0_1"/>
<dbReference type="InParanoid" id="P35202"/>
<dbReference type="OMA" id="TDMCKAL"/>
<dbReference type="OrthoDB" id="25149at2759"/>
<dbReference type="BioCyc" id="MetaCyc:YOR143C-MONOMER"/>
<dbReference type="BioCyc" id="YEAST:YOR143C-MONOMER"/>
<dbReference type="Reactome" id="R-SCE-196819">
    <property type="pathway name" value="Vitamin B1 (thiamin) metabolism"/>
</dbReference>
<dbReference type="UniPathway" id="UPA00060">
    <property type="reaction ID" value="UER00597"/>
</dbReference>
<dbReference type="BioGRID-ORCS" id="854314">
    <property type="hits" value="0 hits in 10 CRISPR screens"/>
</dbReference>
<dbReference type="EvolutionaryTrace" id="P35202"/>
<dbReference type="PRO" id="PR:P35202"/>
<dbReference type="Proteomes" id="UP000002311">
    <property type="component" value="Chromosome XV"/>
</dbReference>
<dbReference type="RNAct" id="P35202">
    <property type="molecule type" value="protein"/>
</dbReference>
<dbReference type="GO" id="GO:0005737">
    <property type="term" value="C:cytoplasm"/>
    <property type="evidence" value="ECO:0007005"/>
    <property type="project" value="SGD"/>
</dbReference>
<dbReference type="GO" id="GO:0005524">
    <property type="term" value="F:ATP binding"/>
    <property type="evidence" value="ECO:0007669"/>
    <property type="project" value="UniProtKB-KW"/>
</dbReference>
<dbReference type="GO" id="GO:0016301">
    <property type="term" value="F:kinase activity"/>
    <property type="evidence" value="ECO:0007669"/>
    <property type="project" value="UniProtKB-KW"/>
</dbReference>
<dbReference type="GO" id="GO:0030975">
    <property type="term" value="F:thiamine binding"/>
    <property type="evidence" value="ECO:0007669"/>
    <property type="project" value="InterPro"/>
</dbReference>
<dbReference type="GO" id="GO:0004788">
    <property type="term" value="F:thiamine diphosphokinase activity"/>
    <property type="evidence" value="ECO:0000314"/>
    <property type="project" value="SGD"/>
</dbReference>
<dbReference type="GO" id="GO:0009229">
    <property type="term" value="P:thiamine diphosphate biosynthetic process"/>
    <property type="evidence" value="ECO:0000315"/>
    <property type="project" value="SGD"/>
</dbReference>
<dbReference type="GO" id="GO:0006772">
    <property type="term" value="P:thiamine metabolic process"/>
    <property type="evidence" value="ECO:0007669"/>
    <property type="project" value="InterPro"/>
</dbReference>
<dbReference type="CDD" id="cd07995">
    <property type="entry name" value="TPK"/>
    <property type="match status" value="1"/>
</dbReference>
<dbReference type="FunFam" id="3.40.50.10240:FF:000005">
    <property type="entry name" value="Thiamine pyrophosphokinase"/>
    <property type="match status" value="1"/>
</dbReference>
<dbReference type="Gene3D" id="3.40.50.10240">
    <property type="entry name" value="Thiamin pyrophosphokinase, catalytic domain"/>
    <property type="match status" value="1"/>
</dbReference>
<dbReference type="Gene3D" id="2.60.120.320">
    <property type="entry name" value="Thiamin pyrophosphokinase, thiamin-binding domain"/>
    <property type="match status" value="1"/>
</dbReference>
<dbReference type="InterPro" id="IPR006282">
    <property type="entry name" value="Thi_PPkinase"/>
</dbReference>
<dbReference type="InterPro" id="IPR016966">
    <property type="entry name" value="Thiamin_pyrophosphokinase_euk"/>
</dbReference>
<dbReference type="InterPro" id="IPR007373">
    <property type="entry name" value="Thiamin_PyroPKinase_B1-bd"/>
</dbReference>
<dbReference type="InterPro" id="IPR036371">
    <property type="entry name" value="TPK_B1-bd_sf"/>
</dbReference>
<dbReference type="InterPro" id="IPR007371">
    <property type="entry name" value="TPK_catalytic"/>
</dbReference>
<dbReference type="InterPro" id="IPR036759">
    <property type="entry name" value="TPK_catalytic_sf"/>
</dbReference>
<dbReference type="PANTHER" id="PTHR13622">
    <property type="entry name" value="THIAMIN PYROPHOSPHOKINASE"/>
    <property type="match status" value="1"/>
</dbReference>
<dbReference type="PANTHER" id="PTHR13622:SF8">
    <property type="entry name" value="THIAMIN PYROPHOSPHOKINASE 1"/>
    <property type="match status" value="1"/>
</dbReference>
<dbReference type="Pfam" id="PF04265">
    <property type="entry name" value="TPK_B1_binding"/>
    <property type="match status" value="1"/>
</dbReference>
<dbReference type="Pfam" id="PF04263">
    <property type="entry name" value="TPK_catalytic"/>
    <property type="match status" value="1"/>
</dbReference>
<dbReference type="PIRSF" id="PIRSF031057">
    <property type="entry name" value="Thiamin_pyrophosphokinase"/>
    <property type="match status" value="1"/>
</dbReference>
<dbReference type="SMART" id="SM00983">
    <property type="entry name" value="TPK_B1_binding"/>
    <property type="match status" value="1"/>
</dbReference>
<dbReference type="SUPFAM" id="SSF63999">
    <property type="entry name" value="Thiamin pyrophosphokinase, catalytic domain"/>
    <property type="match status" value="1"/>
</dbReference>
<dbReference type="SUPFAM" id="SSF63862">
    <property type="entry name" value="Thiamin pyrophosphokinase, substrate-binding domain"/>
    <property type="match status" value="1"/>
</dbReference>
<accession>P35202</accession>
<accession>D6W2K1</accession>